<keyword id="KW-0997">Cell inner membrane</keyword>
<keyword id="KW-1003">Cell membrane</keyword>
<keyword id="KW-0249">Electron transport</keyword>
<keyword id="KW-0285">Flavoprotein</keyword>
<keyword id="KW-0288">FMN</keyword>
<keyword id="KW-0472">Membrane</keyword>
<keyword id="KW-0597">Phosphoprotein</keyword>
<keyword id="KW-1278">Translocase</keyword>
<keyword id="KW-0812">Transmembrane</keyword>
<keyword id="KW-1133">Transmembrane helix</keyword>
<keyword id="KW-0813">Transport</keyword>
<protein>
    <recommendedName>
        <fullName evidence="1">Ion-translocating oxidoreductase complex subunit D</fullName>
        <ecNumber evidence="1">7.-.-.-</ecNumber>
    </recommendedName>
    <alternativeName>
        <fullName evidence="1">Rsx electron transport complex subunit D</fullName>
    </alternativeName>
</protein>
<organism>
    <name type="scientific">Escherichia coli O81 (strain ED1a)</name>
    <dbReference type="NCBI Taxonomy" id="585397"/>
    <lineage>
        <taxon>Bacteria</taxon>
        <taxon>Pseudomonadati</taxon>
        <taxon>Pseudomonadota</taxon>
        <taxon>Gammaproteobacteria</taxon>
        <taxon>Enterobacterales</taxon>
        <taxon>Enterobacteriaceae</taxon>
        <taxon>Escherichia</taxon>
    </lineage>
</organism>
<feature type="chain" id="PRO_1000191679" description="Ion-translocating oxidoreductase complex subunit D">
    <location>
        <begin position="1"/>
        <end position="352"/>
    </location>
</feature>
<feature type="transmembrane region" description="Helical" evidence="1">
    <location>
        <begin position="20"/>
        <end position="40"/>
    </location>
</feature>
<feature type="transmembrane region" description="Helical" evidence="1">
    <location>
        <begin position="42"/>
        <end position="62"/>
    </location>
</feature>
<feature type="transmembrane region" description="Helical" evidence="1">
    <location>
        <begin position="89"/>
        <end position="109"/>
    </location>
</feature>
<feature type="transmembrane region" description="Helical" evidence="1">
    <location>
        <begin position="123"/>
        <end position="143"/>
    </location>
</feature>
<feature type="transmembrane region" description="Helical" evidence="1">
    <location>
        <begin position="214"/>
        <end position="234"/>
    </location>
</feature>
<feature type="transmembrane region" description="Helical" evidence="1">
    <location>
        <begin position="242"/>
        <end position="262"/>
    </location>
</feature>
<feature type="transmembrane region" description="Helical" evidence="1">
    <location>
        <begin position="267"/>
        <end position="287"/>
    </location>
</feature>
<feature type="transmembrane region" description="Helical" evidence="1">
    <location>
        <begin position="301"/>
        <end position="321"/>
    </location>
</feature>
<feature type="transmembrane region" description="Helical" evidence="1">
    <location>
        <begin position="322"/>
        <end position="342"/>
    </location>
</feature>
<feature type="modified residue" description="FMN phosphoryl threonine" evidence="1">
    <location>
        <position position="187"/>
    </location>
</feature>
<sequence length="352" mass="38145">MVFRIASSPYTHNQRQTSRIMLLVLLAAVPGIAAQLWFFGWGTLVQILLASVSALLAEALVLKLRKQSVAATLKDNSALLTGLLLAVSIPPLAPWWMVVLGTVFAVIIAKQLYGGLGQNPFNPAMIGYVVLLISFPVQMTSWLPPHEIAVNIPGFIDAIQVIFSGHTTSGGDMNTLRLGIDGISQATPLDTFKTSVRAGHSVEEIMQYPIYSGILAGAGWQWVNLAWLAGGVWLLWQKAIRWHIPLSFLVTLALCATLGWLFSPDTLAAPQIHLLSGATMLGAFFILTDPVTASTTNRGRLIFGALAGLLVWMIRSFGGYPDGVAFAVLLANITVPLIDYYTRPRVYGHRKG</sequence>
<evidence type="ECO:0000255" key="1">
    <source>
        <dbReference type="HAMAP-Rule" id="MF_00462"/>
    </source>
</evidence>
<comment type="function">
    <text evidence="1">Part of a membrane-bound complex that couples electron transfer with translocation of ions across the membrane. Required to maintain the reduced state of SoxR.</text>
</comment>
<comment type="cofactor">
    <cofactor evidence="1">
        <name>FMN</name>
        <dbReference type="ChEBI" id="CHEBI:58210"/>
    </cofactor>
</comment>
<comment type="subunit">
    <text evidence="1">The complex is composed of six subunits: RsxA, RsxB, RsxC, RsxD, RsxE and RsxG.</text>
</comment>
<comment type="subcellular location">
    <subcellularLocation>
        <location evidence="1">Cell inner membrane</location>
        <topology evidence="1">Multi-pass membrane protein</topology>
    </subcellularLocation>
</comment>
<comment type="similarity">
    <text evidence="1">Belongs to the NqrB/RnfD family.</text>
</comment>
<proteinExistence type="inferred from homology"/>
<accession>B7MV12</accession>
<dbReference type="EC" id="7.-.-.-" evidence="1"/>
<dbReference type="EMBL" id="CU928162">
    <property type="protein sequence ID" value="CAR07928.1"/>
    <property type="molecule type" value="Genomic_DNA"/>
</dbReference>
<dbReference type="RefSeq" id="WP_000231938.1">
    <property type="nucleotide sequence ID" value="NC_011745.1"/>
</dbReference>
<dbReference type="SMR" id="B7MV12"/>
<dbReference type="KEGG" id="ecq:ECED1_1831"/>
<dbReference type="HOGENOM" id="CLU_042020_0_0_6"/>
<dbReference type="Proteomes" id="UP000000748">
    <property type="component" value="Chromosome"/>
</dbReference>
<dbReference type="GO" id="GO:0005886">
    <property type="term" value="C:plasma membrane"/>
    <property type="evidence" value="ECO:0007669"/>
    <property type="project" value="UniProtKB-SubCell"/>
</dbReference>
<dbReference type="GO" id="GO:0022900">
    <property type="term" value="P:electron transport chain"/>
    <property type="evidence" value="ECO:0007669"/>
    <property type="project" value="UniProtKB-UniRule"/>
</dbReference>
<dbReference type="GO" id="GO:0055085">
    <property type="term" value="P:transmembrane transport"/>
    <property type="evidence" value="ECO:0007669"/>
    <property type="project" value="InterPro"/>
</dbReference>
<dbReference type="HAMAP" id="MF_00462">
    <property type="entry name" value="RsxD_RnfD"/>
    <property type="match status" value="1"/>
</dbReference>
<dbReference type="InterPro" id="IPR004338">
    <property type="entry name" value="NqrB/RnfD"/>
</dbReference>
<dbReference type="InterPro" id="IPR011303">
    <property type="entry name" value="RnfD_bac"/>
</dbReference>
<dbReference type="NCBIfam" id="NF002011">
    <property type="entry name" value="PRK00816.1"/>
    <property type="match status" value="1"/>
</dbReference>
<dbReference type="NCBIfam" id="TIGR01946">
    <property type="entry name" value="rnfD"/>
    <property type="match status" value="1"/>
</dbReference>
<dbReference type="PANTHER" id="PTHR30578">
    <property type="entry name" value="ELECTRON TRANSPORT COMPLEX PROTEIN RNFD"/>
    <property type="match status" value="1"/>
</dbReference>
<dbReference type="PANTHER" id="PTHR30578:SF0">
    <property type="entry name" value="ION-TRANSLOCATING OXIDOREDUCTASE COMPLEX SUBUNIT D"/>
    <property type="match status" value="1"/>
</dbReference>
<dbReference type="Pfam" id="PF03116">
    <property type="entry name" value="NQR2_RnfD_RnfE"/>
    <property type="match status" value="1"/>
</dbReference>
<reference key="1">
    <citation type="journal article" date="2009" name="PLoS Genet.">
        <title>Organised genome dynamics in the Escherichia coli species results in highly diverse adaptive paths.</title>
        <authorList>
            <person name="Touchon M."/>
            <person name="Hoede C."/>
            <person name="Tenaillon O."/>
            <person name="Barbe V."/>
            <person name="Baeriswyl S."/>
            <person name="Bidet P."/>
            <person name="Bingen E."/>
            <person name="Bonacorsi S."/>
            <person name="Bouchier C."/>
            <person name="Bouvet O."/>
            <person name="Calteau A."/>
            <person name="Chiapello H."/>
            <person name="Clermont O."/>
            <person name="Cruveiller S."/>
            <person name="Danchin A."/>
            <person name="Diard M."/>
            <person name="Dossat C."/>
            <person name="Karoui M.E."/>
            <person name="Frapy E."/>
            <person name="Garry L."/>
            <person name="Ghigo J.M."/>
            <person name="Gilles A.M."/>
            <person name="Johnson J."/>
            <person name="Le Bouguenec C."/>
            <person name="Lescat M."/>
            <person name="Mangenot S."/>
            <person name="Martinez-Jehanne V."/>
            <person name="Matic I."/>
            <person name="Nassif X."/>
            <person name="Oztas S."/>
            <person name="Petit M.A."/>
            <person name="Pichon C."/>
            <person name="Rouy Z."/>
            <person name="Ruf C.S."/>
            <person name="Schneider D."/>
            <person name="Tourret J."/>
            <person name="Vacherie B."/>
            <person name="Vallenet D."/>
            <person name="Medigue C."/>
            <person name="Rocha E.P.C."/>
            <person name="Denamur E."/>
        </authorList>
    </citation>
    <scope>NUCLEOTIDE SEQUENCE [LARGE SCALE GENOMIC DNA]</scope>
    <source>
        <strain>ED1a</strain>
    </source>
</reference>
<gene>
    <name evidence="1" type="primary">rsxD</name>
    <name type="ordered locus">ECED1_1831</name>
</gene>
<name>RSXD_ECO81</name>